<organism>
    <name type="scientific">Pseudoalteromonas translucida (strain TAC 125)</name>
    <dbReference type="NCBI Taxonomy" id="326442"/>
    <lineage>
        <taxon>Bacteria</taxon>
        <taxon>Pseudomonadati</taxon>
        <taxon>Pseudomonadota</taxon>
        <taxon>Gammaproteobacteria</taxon>
        <taxon>Alteromonadales</taxon>
        <taxon>Pseudoalteromonadaceae</taxon>
        <taxon>Pseudoalteromonas</taxon>
    </lineage>
</organism>
<accession>Q3IJK6</accession>
<dbReference type="EMBL" id="CR954246">
    <property type="protein sequence ID" value="CAI87846.1"/>
    <property type="molecule type" value="Genomic_DNA"/>
</dbReference>
<dbReference type="SMR" id="Q3IJK6"/>
<dbReference type="STRING" id="326442.PSHAa2809"/>
<dbReference type="KEGG" id="pha:PSHAa2809"/>
<dbReference type="eggNOG" id="COG0099">
    <property type="taxonomic scope" value="Bacteria"/>
</dbReference>
<dbReference type="HOGENOM" id="CLU_103849_1_2_6"/>
<dbReference type="BioCyc" id="PHAL326442:PSHA_RS13785-MONOMER"/>
<dbReference type="Proteomes" id="UP000006843">
    <property type="component" value="Chromosome I"/>
</dbReference>
<dbReference type="GO" id="GO:0005829">
    <property type="term" value="C:cytosol"/>
    <property type="evidence" value="ECO:0007669"/>
    <property type="project" value="TreeGrafter"/>
</dbReference>
<dbReference type="GO" id="GO:0015935">
    <property type="term" value="C:small ribosomal subunit"/>
    <property type="evidence" value="ECO:0007669"/>
    <property type="project" value="TreeGrafter"/>
</dbReference>
<dbReference type="GO" id="GO:0019843">
    <property type="term" value="F:rRNA binding"/>
    <property type="evidence" value="ECO:0007669"/>
    <property type="project" value="UniProtKB-UniRule"/>
</dbReference>
<dbReference type="GO" id="GO:0003735">
    <property type="term" value="F:structural constituent of ribosome"/>
    <property type="evidence" value="ECO:0007669"/>
    <property type="project" value="InterPro"/>
</dbReference>
<dbReference type="GO" id="GO:0000049">
    <property type="term" value="F:tRNA binding"/>
    <property type="evidence" value="ECO:0007669"/>
    <property type="project" value="UniProtKB-UniRule"/>
</dbReference>
<dbReference type="GO" id="GO:0006412">
    <property type="term" value="P:translation"/>
    <property type="evidence" value="ECO:0007669"/>
    <property type="project" value="UniProtKB-UniRule"/>
</dbReference>
<dbReference type="FunFam" id="1.10.8.50:FF:000001">
    <property type="entry name" value="30S ribosomal protein S13"/>
    <property type="match status" value="1"/>
</dbReference>
<dbReference type="FunFam" id="4.10.910.10:FF:000001">
    <property type="entry name" value="30S ribosomal protein S13"/>
    <property type="match status" value="1"/>
</dbReference>
<dbReference type="Gene3D" id="1.10.8.50">
    <property type="match status" value="1"/>
</dbReference>
<dbReference type="Gene3D" id="4.10.910.10">
    <property type="entry name" value="30s ribosomal protein s13, domain 2"/>
    <property type="match status" value="1"/>
</dbReference>
<dbReference type="HAMAP" id="MF_01315">
    <property type="entry name" value="Ribosomal_uS13"/>
    <property type="match status" value="1"/>
</dbReference>
<dbReference type="InterPro" id="IPR027437">
    <property type="entry name" value="Rbsml_uS13_C"/>
</dbReference>
<dbReference type="InterPro" id="IPR001892">
    <property type="entry name" value="Ribosomal_uS13"/>
</dbReference>
<dbReference type="InterPro" id="IPR010979">
    <property type="entry name" value="Ribosomal_uS13-like_H2TH"/>
</dbReference>
<dbReference type="InterPro" id="IPR019980">
    <property type="entry name" value="Ribosomal_uS13_bac-type"/>
</dbReference>
<dbReference type="InterPro" id="IPR018269">
    <property type="entry name" value="Ribosomal_uS13_CS"/>
</dbReference>
<dbReference type="NCBIfam" id="TIGR03631">
    <property type="entry name" value="uS13_bact"/>
    <property type="match status" value="1"/>
</dbReference>
<dbReference type="PANTHER" id="PTHR10871">
    <property type="entry name" value="30S RIBOSOMAL PROTEIN S13/40S RIBOSOMAL PROTEIN S18"/>
    <property type="match status" value="1"/>
</dbReference>
<dbReference type="PANTHER" id="PTHR10871:SF1">
    <property type="entry name" value="SMALL RIBOSOMAL SUBUNIT PROTEIN US13M"/>
    <property type="match status" value="1"/>
</dbReference>
<dbReference type="Pfam" id="PF00416">
    <property type="entry name" value="Ribosomal_S13"/>
    <property type="match status" value="1"/>
</dbReference>
<dbReference type="PIRSF" id="PIRSF002134">
    <property type="entry name" value="Ribosomal_S13"/>
    <property type="match status" value="1"/>
</dbReference>
<dbReference type="SUPFAM" id="SSF46946">
    <property type="entry name" value="S13-like H2TH domain"/>
    <property type="match status" value="1"/>
</dbReference>
<dbReference type="PROSITE" id="PS00646">
    <property type="entry name" value="RIBOSOMAL_S13_1"/>
    <property type="match status" value="1"/>
</dbReference>
<dbReference type="PROSITE" id="PS50159">
    <property type="entry name" value="RIBOSOMAL_S13_2"/>
    <property type="match status" value="1"/>
</dbReference>
<gene>
    <name evidence="1" type="primary">rpsM</name>
    <name type="ordered locus">PSHAa2809</name>
</gene>
<name>RS13_PSET1</name>
<protein>
    <recommendedName>
        <fullName evidence="1">Small ribosomal subunit protein uS13</fullName>
    </recommendedName>
    <alternativeName>
        <fullName evidence="3">30S ribosomal protein S13</fullName>
    </alternativeName>
</protein>
<reference key="1">
    <citation type="journal article" date="2005" name="Genome Res.">
        <title>Coping with cold: the genome of the versatile marine Antarctica bacterium Pseudoalteromonas haloplanktis TAC125.</title>
        <authorList>
            <person name="Medigue C."/>
            <person name="Krin E."/>
            <person name="Pascal G."/>
            <person name="Barbe V."/>
            <person name="Bernsel A."/>
            <person name="Bertin P.N."/>
            <person name="Cheung F."/>
            <person name="Cruveiller S."/>
            <person name="D'Amico S."/>
            <person name="Duilio A."/>
            <person name="Fang G."/>
            <person name="Feller G."/>
            <person name="Ho C."/>
            <person name="Mangenot S."/>
            <person name="Marino G."/>
            <person name="Nilsson J."/>
            <person name="Parrilli E."/>
            <person name="Rocha E.P.C."/>
            <person name="Rouy Z."/>
            <person name="Sekowska A."/>
            <person name="Tutino M.L."/>
            <person name="Vallenet D."/>
            <person name="von Heijne G."/>
            <person name="Danchin A."/>
        </authorList>
    </citation>
    <scope>NUCLEOTIDE SEQUENCE [LARGE SCALE GENOMIC DNA]</scope>
    <source>
        <strain>TAC 125</strain>
    </source>
</reference>
<sequence length="118" mass="13113">MARIAGINVPDHKHAVIGLTAIYGIGKTRSKAILAATGIAETTKIGELSDETLDVLRDAVGKYTVEGDLRREVTLNIKRLMDLGCYRGLRHRRSLPLRGQRTKTNARTRKGPRKPIKR</sequence>
<evidence type="ECO:0000255" key="1">
    <source>
        <dbReference type="HAMAP-Rule" id="MF_01315"/>
    </source>
</evidence>
<evidence type="ECO:0000256" key="2">
    <source>
        <dbReference type="SAM" id="MobiDB-lite"/>
    </source>
</evidence>
<evidence type="ECO:0000305" key="3"/>
<feature type="chain" id="PRO_0000230550" description="Small ribosomal subunit protein uS13">
    <location>
        <begin position="1"/>
        <end position="118"/>
    </location>
</feature>
<feature type="region of interest" description="Disordered" evidence="2">
    <location>
        <begin position="94"/>
        <end position="118"/>
    </location>
</feature>
<keyword id="KW-1185">Reference proteome</keyword>
<keyword id="KW-0687">Ribonucleoprotein</keyword>
<keyword id="KW-0689">Ribosomal protein</keyword>
<keyword id="KW-0694">RNA-binding</keyword>
<keyword id="KW-0699">rRNA-binding</keyword>
<keyword id="KW-0820">tRNA-binding</keyword>
<proteinExistence type="inferred from homology"/>
<comment type="function">
    <text evidence="1">Located at the top of the head of the 30S subunit, it contacts several helices of the 16S rRNA. In the 70S ribosome it contacts the 23S rRNA (bridge B1a) and protein L5 of the 50S subunit (bridge B1b), connecting the 2 subunits; these bridges are implicated in subunit movement. Contacts the tRNAs in the A and P-sites.</text>
</comment>
<comment type="subunit">
    <text evidence="1">Part of the 30S ribosomal subunit. Forms a loose heterodimer with protein S19. Forms two bridges to the 50S subunit in the 70S ribosome.</text>
</comment>
<comment type="similarity">
    <text evidence="1">Belongs to the universal ribosomal protein uS13 family.</text>
</comment>